<organism>
    <name type="scientific">Escherichia coli (strain K12 / MC4100 / BW2952)</name>
    <dbReference type="NCBI Taxonomy" id="595496"/>
    <lineage>
        <taxon>Bacteria</taxon>
        <taxon>Pseudomonadati</taxon>
        <taxon>Pseudomonadota</taxon>
        <taxon>Gammaproteobacteria</taxon>
        <taxon>Enterobacterales</taxon>
        <taxon>Enterobacteriaceae</taxon>
        <taxon>Escherichia</taxon>
    </lineage>
</organism>
<dbReference type="EMBL" id="CP001396">
    <property type="protein sequence ID" value="ACR64563.1"/>
    <property type="molecule type" value="Genomic_DNA"/>
</dbReference>
<dbReference type="RefSeq" id="WP_000254839.1">
    <property type="nucleotide sequence ID" value="NC_012759.1"/>
</dbReference>
<dbReference type="SMR" id="C4ZVU4"/>
<dbReference type="GeneID" id="93774718"/>
<dbReference type="KEGG" id="ebw:BWG_2175"/>
<dbReference type="HOGENOM" id="CLU_070331_1_0_6"/>
<dbReference type="GO" id="GO:0005886">
    <property type="term" value="C:plasma membrane"/>
    <property type="evidence" value="ECO:0007669"/>
    <property type="project" value="UniProtKB-SubCell"/>
</dbReference>
<dbReference type="GO" id="GO:0009675">
    <property type="term" value="F:high-affinity sulfate:proton symporter activity"/>
    <property type="evidence" value="ECO:0007669"/>
    <property type="project" value="TreeGrafter"/>
</dbReference>
<dbReference type="GO" id="GO:0019344">
    <property type="term" value="P:cysteine biosynthetic process"/>
    <property type="evidence" value="ECO:0007669"/>
    <property type="project" value="UniProtKB-UniRule"/>
</dbReference>
<dbReference type="GO" id="GO:0000103">
    <property type="term" value="P:sulfate assimilation"/>
    <property type="evidence" value="ECO:0007669"/>
    <property type="project" value="InterPro"/>
</dbReference>
<dbReference type="HAMAP" id="MF_00468">
    <property type="entry name" value="CysZ"/>
    <property type="match status" value="1"/>
</dbReference>
<dbReference type="InterPro" id="IPR050480">
    <property type="entry name" value="CysZ_sulfate_transptr"/>
</dbReference>
<dbReference type="InterPro" id="IPR022985">
    <property type="entry name" value="Sulfate_CysZ"/>
</dbReference>
<dbReference type="NCBIfam" id="NF003433">
    <property type="entry name" value="PRK04949.1"/>
    <property type="match status" value="1"/>
</dbReference>
<dbReference type="PANTHER" id="PTHR37468">
    <property type="entry name" value="SULFATE TRANSPORTER CYSZ"/>
    <property type="match status" value="1"/>
</dbReference>
<dbReference type="PANTHER" id="PTHR37468:SF1">
    <property type="entry name" value="SULFATE TRANSPORTER CYSZ"/>
    <property type="match status" value="1"/>
</dbReference>
<dbReference type="Pfam" id="PF07264">
    <property type="entry name" value="EI24"/>
    <property type="match status" value="1"/>
</dbReference>
<name>CYSZ_ECOBW</name>
<feature type="chain" id="PRO_1000206332" description="Sulfate transporter CysZ">
    <location>
        <begin position="1"/>
        <end position="253"/>
    </location>
</feature>
<feature type="transmembrane region" description="Helical" evidence="1">
    <location>
        <begin position="31"/>
        <end position="51"/>
    </location>
</feature>
<feature type="transmembrane region" description="Helical" evidence="1">
    <location>
        <begin position="75"/>
        <end position="95"/>
    </location>
</feature>
<feature type="transmembrane region" description="Helical" evidence="1">
    <location>
        <begin position="151"/>
        <end position="171"/>
    </location>
</feature>
<feature type="transmembrane region" description="Helical" evidence="1">
    <location>
        <begin position="222"/>
        <end position="242"/>
    </location>
</feature>
<gene>
    <name evidence="1" type="primary">cysZ</name>
    <name type="ordered locus">BWG_2175</name>
</gene>
<sequence>MVSSFTSAPRSGFYYFAQGWKLVSQPGIRRFVILPLLVNILLMGGAFWWLFTQLDVWIPTLMSYVPDWLQWLSYLLWPLAVISVLLVFGYFFSTIANWIAAPFNGLLAEQLEARLTGATPPDTGIFGIMKDVPRIMKREWQKFAWYLPRAIVLLILYFIPGIGQTVAPVLWFLFSAWMLAIQYCDYPFDNHKVPFKEMRTALRTRKITNMQFGALTSLFTMIPLLNLFIMPVAVCGATAMWVDCYRDKHAMWR</sequence>
<proteinExistence type="inferred from homology"/>
<keyword id="KW-0028">Amino-acid biosynthesis</keyword>
<keyword id="KW-0997">Cell inner membrane</keyword>
<keyword id="KW-1003">Cell membrane</keyword>
<keyword id="KW-0198">Cysteine biosynthesis</keyword>
<keyword id="KW-0472">Membrane</keyword>
<keyword id="KW-0764">Sulfate transport</keyword>
<keyword id="KW-0812">Transmembrane</keyword>
<keyword id="KW-1133">Transmembrane helix</keyword>
<keyword id="KW-0813">Transport</keyword>
<evidence type="ECO:0000255" key="1">
    <source>
        <dbReference type="HAMAP-Rule" id="MF_00468"/>
    </source>
</evidence>
<protein>
    <recommendedName>
        <fullName evidence="1">Sulfate transporter CysZ</fullName>
    </recommendedName>
</protein>
<accession>C4ZVU4</accession>
<reference key="1">
    <citation type="journal article" date="2009" name="J. Bacteriol.">
        <title>Genomic sequencing reveals regulatory mutations and recombinational events in the widely used MC4100 lineage of Escherichia coli K-12.</title>
        <authorList>
            <person name="Ferenci T."/>
            <person name="Zhou Z."/>
            <person name="Betteridge T."/>
            <person name="Ren Y."/>
            <person name="Liu Y."/>
            <person name="Feng L."/>
            <person name="Reeves P.R."/>
            <person name="Wang L."/>
        </authorList>
    </citation>
    <scope>NUCLEOTIDE SEQUENCE [LARGE SCALE GENOMIC DNA]</scope>
    <source>
        <strain>K12 / MC4100 / BW2952</strain>
    </source>
</reference>
<comment type="function">
    <text evidence="1">High affinity, high specificity proton-dependent sulfate transporter, which mediates sulfate uptake. Provides the sulfur source for the cysteine synthesis pathway.</text>
</comment>
<comment type="subcellular location">
    <subcellularLocation>
        <location evidence="1">Cell inner membrane</location>
        <topology evidence="1">Multi-pass membrane protein</topology>
    </subcellularLocation>
</comment>
<comment type="similarity">
    <text evidence="1">Belongs to the CysZ family.</text>
</comment>